<evidence type="ECO:0000255" key="1">
    <source>
        <dbReference type="HAMAP-Rule" id="MF_00318"/>
    </source>
</evidence>
<dbReference type="EC" id="4.2.1.11" evidence="1"/>
<dbReference type="EMBL" id="CP000285">
    <property type="protein sequence ID" value="ABE57981.1"/>
    <property type="molecule type" value="Genomic_DNA"/>
</dbReference>
<dbReference type="RefSeq" id="WP_011505927.1">
    <property type="nucleotide sequence ID" value="NC_007963.1"/>
</dbReference>
<dbReference type="SMR" id="Q1QZX7"/>
<dbReference type="STRING" id="290398.Csal_0619"/>
<dbReference type="GeneID" id="95333374"/>
<dbReference type="KEGG" id="csa:Csal_0619"/>
<dbReference type="eggNOG" id="COG0148">
    <property type="taxonomic scope" value="Bacteria"/>
</dbReference>
<dbReference type="HOGENOM" id="CLU_031223_2_1_6"/>
<dbReference type="OrthoDB" id="9804716at2"/>
<dbReference type="UniPathway" id="UPA00109">
    <property type="reaction ID" value="UER00187"/>
</dbReference>
<dbReference type="Proteomes" id="UP000000239">
    <property type="component" value="Chromosome"/>
</dbReference>
<dbReference type="GO" id="GO:0009986">
    <property type="term" value="C:cell surface"/>
    <property type="evidence" value="ECO:0007669"/>
    <property type="project" value="UniProtKB-SubCell"/>
</dbReference>
<dbReference type="GO" id="GO:0005576">
    <property type="term" value="C:extracellular region"/>
    <property type="evidence" value="ECO:0007669"/>
    <property type="project" value="UniProtKB-SubCell"/>
</dbReference>
<dbReference type="GO" id="GO:0000015">
    <property type="term" value="C:phosphopyruvate hydratase complex"/>
    <property type="evidence" value="ECO:0007669"/>
    <property type="project" value="InterPro"/>
</dbReference>
<dbReference type="GO" id="GO:0000287">
    <property type="term" value="F:magnesium ion binding"/>
    <property type="evidence" value="ECO:0007669"/>
    <property type="project" value="UniProtKB-UniRule"/>
</dbReference>
<dbReference type="GO" id="GO:0004634">
    <property type="term" value="F:phosphopyruvate hydratase activity"/>
    <property type="evidence" value="ECO:0007669"/>
    <property type="project" value="UniProtKB-UniRule"/>
</dbReference>
<dbReference type="GO" id="GO:0006096">
    <property type="term" value="P:glycolytic process"/>
    <property type="evidence" value="ECO:0007669"/>
    <property type="project" value="UniProtKB-UniRule"/>
</dbReference>
<dbReference type="CDD" id="cd03313">
    <property type="entry name" value="enolase"/>
    <property type="match status" value="1"/>
</dbReference>
<dbReference type="FunFam" id="3.20.20.120:FF:000001">
    <property type="entry name" value="Enolase"/>
    <property type="match status" value="1"/>
</dbReference>
<dbReference type="FunFam" id="3.30.390.10:FF:000001">
    <property type="entry name" value="Enolase"/>
    <property type="match status" value="1"/>
</dbReference>
<dbReference type="Gene3D" id="3.20.20.120">
    <property type="entry name" value="Enolase-like C-terminal domain"/>
    <property type="match status" value="1"/>
</dbReference>
<dbReference type="Gene3D" id="3.30.390.10">
    <property type="entry name" value="Enolase-like, N-terminal domain"/>
    <property type="match status" value="1"/>
</dbReference>
<dbReference type="HAMAP" id="MF_00318">
    <property type="entry name" value="Enolase"/>
    <property type="match status" value="1"/>
</dbReference>
<dbReference type="InterPro" id="IPR000941">
    <property type="entry name" value="Enolase"/>
</dbReference>
<dbReference type="InterPro" id="IPR036849">
    <property type="entry name" value="Enolase-like_C_sf"/>
</dbReference>
<dbReference type="InterPro" id="IPR029017">
    <property type="entry name" value="Enolase-like_N"/>
</dbReference>
<dbReference type="InterPro" id="IPR020810">
    <property type="entry name" value="Enolase_C"/>
</dbReference>
<dbReference type="InterPro" id="IPR020809">
    <property type="entry name" value="Enolase_CS"/>
</dbReference>
<dbReference type="InterPro" id="IPR020811">
    <property type="entry name" value="Enolase_N"/>
</dbReference>
<dbReference type="NCBIfam" id="TIGR01060">
    <property type="entry name" value="eno"/>
    <property type="match status" value="1"/>
</dbReference>
<dbReference type="PANTHER" id="PTHR11902">
    <property type="entry name" value="ENOLASE"/>
    <property type="match status" value="1"/>
</dbReference>
<dbReference type="PANTHER" id="PTHR11902:SF1">
    <property type="entry name" value="ENOLASE"/>
    <property type="match status" value="1"/>
</dbReference>
<dbReference type="Pfam" id="PF00113">
    <property type="entry name" value="Enolase_C"/>
    <property type="match status" value="1"/>
</dbReference>
<dbReference type="Pfam" id="PF03952">
    <property type="entry name" value="Enolase_N"/>
    <property type="match status" value="1"/>
</dbReference>
<dbReference type="PIRSF" id="PIRSF001400">
    <property type="entry name" value="Enolase"/>
    <property type="match status" value="1"/>
</dbReference>
<dbReference type="PRINTS" id="PR00148">
    <property type="entry name" value="ENOLASE"/>
</dbReference>
<dbReference type="SFLD" id="SFLDF00002">
    <property type="entry name" value="enolase"/>
    <property type="match status" value="1"/>
</dbReference>
<dbReference type="SFLD" id="SFLDG00178">
    <property type="entry name" value="enolase"/>
    <property type="match status" value="1"/>
</dbReference>
<dbReference type="SMART" id="SM01192">
    <property type="entry name" value="Enolase_C"/>
    <property type="match status" value="1"/>
</dbReference>
<dbReference type="SMART" id="SM01193">
    <property type="entry name" value="Enolase_N"/>
    <property type="match status" value="1"/>
</dbReference>
<dbReference type="SUPFAM" id="SSF51604">
    <property type="entry name" value="Enolase C-terminal domain-like"/>
    <property type="match status" value="1"/>
</dbReference>
<dbReference type="SUPFAM" id="SSF54826">
    <property type="entry name" value="Enolase N-terminal domain-like"/>
    <property type="match status" value="1"/>
</dbReference>
<dbReference type="PROSITE" id="PS00164">
    <property type="entry name" value="ENOLASE"/>
    <property type="match status" value="1"/>
</dbReference>
<protein>
    <recommendedName>
        <fullName evidence="1">Enolase</fullName>
        <ecNumber evidence="1">4.2.1.11</ecNumber>
    </recommendedName>
    <alternativeName>
        <fullName evidence="1">2-phospho-D-glycerate hydro-lyase</fullName>
    </alternativeName>
    <alternativeName>
        <fullName evidence="1">2-phosphoglycerate dehydratase</fullName>
    </alternativeName>
</protein>
<comment type="function">
    <text evidence="1">Catalyzes the reversible conversion of 2-phosphoglycerate (2-PG) into phosphoenolpyruvate (PEP). It is essential for the degradation of carbohydrates via glycolysis.</text>
</comment>
<comment type="catalytic activity">
    <reaction evidence="1">
        <text>(2R)-2-phosphoglycerate = phosphoenolpyruvate + H2O</text>
        <dbReference type="Rhea" id="RHEA:10164"/>
        <dbReference type="ChEBI" id="CHEBI:15377"/>
        <dbReference type="ChEBI" id="CHEBI:58289"/>
        <dbReference type="ChEBI" id="CHEBI:58702"/>
        <dbReference type="EC" id="4.2.1.11"/>
    </reaction>
</comment>
<comment type="cofactor">
    <cofactor evidence="1">
        <name>Mg(2+)</name>
        <dbReference type="ChEBI" id="CHEBI:18420"/>
    </cofactor>
    <text evidence="1">Binds a second Mg(2+) ion via substrate during catalysis.</text>
</comment>
<comment type="pathway">
    <text evidence="1">Carbohydrate degradation; glycolysis; pyruvate from D-glyceraldehyde 3-phosphate: step 4/5.</text>
</comment>
<comment type="subunit">
    <text evidence="1">Component of the RNA degradosome, a multiprotein complex involved in RNA processing and mRNA degradation.</text>
</comment>
<comment type="subcellular location">
    <subcellularLocation>
        <location evidence="1">Cytoplasm</location>
    </subcellularLocation>
    <subcellularLocation>
        <location evidence="1">Secreted</location>
    </subcellularLocation>
    <subcellularLocation>
        <location evidence="1">Cell surface</location>
    </subcellularLocation>
    <text evidence="1">Fractions of enolase are present in both the cytoplasm and on the cell surface.</text>
</comment>
<comment type="similarity">
    <text evidence="1">Belongs to the enolase family.</text>
</comment>
<feature type="chain" id="PRO_0000267017" description="Enolase">
    <location>
        <begin position="1"/>
        <end position="431"/>
    </location>
</feature>
<feature type="active site" description="Proton donor" evidence="1">
    <location>
        <position position="209"/>
    </location>
</feature>
<feature type="active site" description="Proton acceptor" evidence="1">
    <location>
        <position position="341"/>
    </location>
</feature>
<feature type="binding site" evidence="1">
    <location>
        <position position="167"/>
    </location>
    <ligand>
        <name>(2R)-2-phosphoglycerate</name>
        <dbReference type="ChEBI" id="CHEBI:58289"/>
    </ligand>
</feature>
<feature type="binding site" evidence="1">
    <location>
        <position position="246"/>
    </location>
    <ligand>
        <name>Mg(2+)</name>
        <dbReference type="ChEBI" id="CHEBI:18420"/>
    </ligand>
</feature>
<feature type="binding site" evidence="1">
    <location>
        <position position="289"/>
    </location>
    <ligand>
        <name>Mg(2+)</name>
        <dbReference type="ChEBI" id="CHEBI:18420"/>
    </ligand>
</feature>
<feature type="binding site" evidence="1">
    <location>
        <position position="316"/>
    </location>
    <ligand>
        <name>Mg(2+)</name>
        <dbReference type="ChEBI" id="CHEBI:18420"/>
    </ligand>
</feature>
<feature type="binding site" evidence="1">
    <location>
        <position position="341"/>
    </location>
    <ligand>
        <name>(2R)-2-phosphoglycerate</name>
        <dbReference type="ChEBI" id="CHEBI:58289"/>
    </ligand>
</feature>
<feature type="binding site" evidence="1">
    <location>
        <position position="370"/>
    </location>
    <ligand>
        <name>(2R)-2-phosphoglycerate</name>
        <dbReference type="ChEBI" id="CHEBI:58289"/>
    </ligand>
</feature>
<feature type="binding site" evidence="1">
    <location>
        <position position="371"/>
    </location>
    <ligand>
        <name>(2R)-2-phosphoglycerate</name>
        <dbReference type="ChEBI" id="CHEBI:58289"/>
    </ligand>
</feature>
<feature type="binding site" evidence="1">
    <location>
        <position position="392"/>
    </location>
    <ligand>
        <name>(2R)-2-phosphoglycerate</name>
        <dbReference type="ChEBI" id="CHEBI:58289"/>
    </ligand>
</feature>
<sequence length="431" mass="45374">MAEIKDIHALEVLDSRGNPTVQADVVLASGVRGTACAPSGASTGSREALELRDGDTSRYLGKGVLKAVEAVNGRIRDALVGKDALDQRALDAAMLELDGTDNKAGLGANAILAVSLAAAKAAAIEKGVPLYAHIADLYGQSGQFRMPVPMMNILNGGEHADNNVDIQEFMIQPVGAPSFREALRMGAEIFHALKKVLAARGLSTSVGDEGGFAPNLASNAEALAVIQQAVEKAGYVLGKDVTLALDCASSEFYQDGQYNLSGEGKSYDAAGFVDYLAALCDQYPIVSIEDGMDESDWAGWKALTEKLGDKVQLVGDDLFVTNTRILKRGIDEHIGNSILIKFNQIGSLSETLDAIKMAQDAGFTAVISHRSGETEDTTIADLAVGTSAGQIKTGSLCRSDRVAKYNRLLVIEQELEGQAVYPGLAAIKGQG</sequence>
<gene>
    <name evidence="1" type="primary">eno</name>
    <name type="ordered locus">Csal_0619</name>
</gene>
<proteinExistence type="inferred from homology"/>
<organism>
    <name type="scientific">Chromohalobacter salexigens (strain ATCC BAA-138 / DSM 3043 / CIP 106854 / NCIMB 13768 / 1H11)</name>
    <dbReference type="NCBI Taxonomy" id="290398"/>
    <lineage>
        <taxon>Bacteria</taxon>
        <taxon>Pseudomonadati</taxon>
        <taxon>Pseudomonadota</taxon>
        <taxon>Gammaproteobacteria</taxon>
        <taxon>Oceanospirillales</taxon>
        <taxon>Halomonadaceae</taxon>
        <taxon>Chromohalobacter</taxon>
    </lineage>
</organism>
<reference key="1">
    <citation type="journal article" date="2011" name="Stand. Genomic Sci.">
        <title>Complete genome sequence of the halophilic and highly halotolerant Chromohalobacter salexigens type strain (1H11(T)).</title>
        <authorList>
            <person name="Copeland A."/>
            <person name="O'Connor K."/>
            <person name="Lucas S."/>
            <person name="Lapidus A."/>
            <person name="Berry K.W."/>
            <person name="Detter J.C."/>
            <person name="Del Rio T.G."/>
            <person name="Hammon N."/>
            <person name="Dalin E."/>
            <person name="Tice H."/>
            <person name="Pitluck S."/>
            <person name="Bruce D."/>
            <person name="Goodwin L."/>
            <person name="Han C."/>
            <person name="Tapia R."/>
            <person name="Saunders E."/>
            <person name="Schmutz J."/>
            <person name="Brettin T."/>
            <person name="Larimer F."/>
            <person name="Land M."/>
            <person name="Hauser L."/>
            <person name="Vargas C."/>
            <person name="Nieto J.J."/>
            <person name="Kyrpides N.C."/>
            <person name="Ivanova N."/>
            <person name="Goker M."/>
            <person name="Klenk H.P."/>
            <person name="Csonka L.N."/>
            <person name="Woyke T."/>
        </authorList>
    </citation>
    <scope>NUCLEOTIDE SEQUENCE [LARGE SCALE GENOMIC DNA]</scope>
    <source>
        <strain>ATCC BAA-138 / DSM 3043 / CIP 106854 / NCIMB 13768 / 1H11</strain>
    </source>
</reference>
<accession>Q1QZX7</accession>
<name>ENO_CHRSD</name>
<keyword id="KW-0963">Cytoplasm</keyword>
<keyword id="KW-0324">Glycolysis</keyword>
<keyword id="KW-0456">Lyase</keyword>
<keyword id="KW-0460">Magnesium</keyword>
<keyword id="KW-0479">Metal-binding</keyword>
<keyword id="KW-1185">Reference proteome</keyword>
<keyword id="KW-0964">Secreted</keyword>